<comment type="function">
    <text evidence="1">Involved in the high-affinity zinc uptake transport system.</text>
</comment>
<comment type="subcellular location">
    <subcellularLocation>
        <location evidence="3">Cell membrane</location>
        <topology evidence="3">Multi-pass membrane protein</topology>
    </subcellularLocation>
</comment>
<comment type="similarity">
    <text evidence="3">Belongs to the ABC-3 integral membrane protein family.</text>
</comment>
<accession>P57402</accession>
<evidence type="ECO:0000250" key="1"/>
<evidence type="ECO:0000255" key="2"/>
<evidence type="ECO:0000305" key="3"/>
<gene>
    <name type="primary">znuB</name>
    <name type="ordered locus">BU317</name>
</gene>
<organism>
    <name type="scientific">Buchnera aphidicola subsp. Acyrthosiphon pisum (strain APS)</name>
    <name type="common">Acyrthosiphon pisum symbiotic bacterium</name>
    <dbReference type="NCBI Taxonomy" id="107806"/>
    <lineage>
        <taxon>Bacteria</taxon>
        <taxon>Pseudomonadati</taxon>
        <taxon>Pseudomonadota</taxon>
        <taxon>Gammaproteobacteria</taxon>
        <taxon>Enterobacterales</taxon>
        <taxon>Erwiniaceae</taxon>
        <taxon>Buchnera</taxon>
    </lineage>
</organism>
<keyword id="KW-1003">Cell membrane</keyword>
<keyword id="KW-0406">Ion transport</keyword>
<keyword id="KW-0472">Membrane</keyword>
<keyword id="KW-1185">Reference proteome</keyword>
<keyword id="KW-0812">Transmembrane</keyword>
<keyword id="KW-1133">Transmembrane helix</keyword>
<keyword id="KW-0813">Transport</keyword>
<keyword id="KW-0862">Zinc</keyword>
<keyword id="KW-0864">Zinc transport</keyword>
<reference key="1">
    <citation type="journal article" date="2000" name="Nature">
        <title>Genome sequence of the endocellular bacterial symbiont of aphids Buchnera sp. APS.</title>
        <authorList>
            <person name="Shigenobu S."/>
            <person name="Watanabe H."/>
            <person name="Hattori M."/>
            <person name="Sakaki Y."/>
            <person name="Ishikawa H."/>
        </authorList>
    </citation>
    <scope>NUCLEOTIDE SEQUENCE [LARGE SCALE GENOMIC DNA]</scope>
    <source>
        <strain>APS</strain>
    </source>
</reference>
<proteinExistence type="inferred from homology"/>
<name>ZNUB_BUCAI</name>
<dbReference type="EMBL" id="BA000003">
    <property type="protein sequence ID" value="BAB13025.1"/>
    <property type="molecule type" value="Genomic_DNA"/>
</dbReference>
<dbReference type="RefSeq" id="NP_240139.1">
    <property type="nucleotide sequence ID" value="NC_002528.1"/>
</dbReference>
<dbReference type="RefSeq" id="WP_010896063.1">
    <property type="nucleotide sequence ID" value="NC_002528.1"/>
</dbReference>
<dbReference type="SMR" id="P57402"/>
<dbReference type="STRING" id="563178.BUAP5A_310"/>
<dbReference type="EnsemblBacteria" id="BAB13025">
    <property type="protein sequence ID" value="BAB13025"/>
    <property type="gene ID" value="BAB13025"/>
</dbReference>
<dbReference type="KEGG" id="buc:BU317"/>
<dbReference type="PATRIC" id="fig|107806.10.peg.329"/>
<dbReference type="eggNOG" id="COG1108">
    <property type="taxonomic scope" value="Bacteria"/>
</dbReference>
<dbReference type="HOGENOM" id="CLU_028808_3_2_6"/>
<dbReference type="Proteomes" id="UP000001806">
    <property type="component" value="Chromosome"/>
</dbReference>
<dbReference type="GO" id="GO:0043190">
    <property type="term" value="C:ATP-binding cassette (ABC) transporter complex"/>
    <property type="evidence" value="ECO:0007669"/>
    <property type="project" value="InterPro"/>
</dbReference>
<dbReference type="GO" id="GO:0010043">
    <property type="term" value="P:response to zinc ion"/>
    <property type="evidence" value="ECO:0007669"/>
    <property type="project" value="TreeGrafter"/>
</dbReference>
<dbReference type="GO" id="GO:0055085">
    <property type="term" value="P:transmembrane transport"/>
    <property type="evidence" value="ECO:0007669"/>
    <property type="project" value="InterPro"/>
</dbReference>
<dbReference type="GO" id="GO:0006829">
    <property type="term" value="P:zinc ion transport"/>
    <property type="evidence" value="ECO:0007669"/>
    <property type="project" value="UniProtKB-KW"/>
</dbReference>
<dbReference type="CDD" id="cd06550">
    <property type="entry name" value="TM_ABC_iron-siderophores_like"/>
    <property type="match status" value="1"/>
</dbReference>
<dbReference type="Gene3D" id="1.10.3470.10">
    <property type="entry name" value="ABC transporter involved in vitamin B12 uptake, BtuC"/>
    <property type="match status" value="1"/>
</dbReference>
<dbReference type="InterPro" id="IPR037294">
    <property type="entry name" value="ABC_BtuC-like"/>
</dbReference>
<dbReference type="InterPro" id="IPR001626">
    <property type="entry name" value="ABC_TroCD"/>
</dbReference>
<dbReference type="NCBIfam" id="NF007089">
    <property type="entry name" value="PRK09543.1"/>
    <property type="match status" value="1"/>
</dbReference>
<dbReference type="PANTHER" id="PTHR30477">
    <property type="entry name" value="ABC-TRANSPORTER METAL-BINDING PROTEIN"/>
    <property type="match status" value="1"/>
</dbReference>
<dbReference type="PANTHER" id="PTHR30477:SF23">
    <property type="entry name" value="HIGH-AFFINITY ZINC UPTAKE SYSTEM MEMBRANE PROTEIN ZNUB"/>
    <property type="match status" value="1"/>
</dbReference>
<dbReference type="Pfam" id="PF00950">
    <property type="entry name" value="ABC-3"/>
    <property type="match status" value="1"/>
</dbReference>
<dbReference type="SUPFAM" id="SSF81345">
    <property type="entry name" value="ABC transporter involved in vitamin B12 uptake, BtuC"/>
    <property type="match status" value="1"/>
</dbReference>
<feature type="chain" id="PRO_0000171158" description="High-affinity zinc uptake system membrane protein ZnuB">
    <location>
        <begin position="1"/>
        <end position="262"/>
    </location>
</feature>
<feature type="transmembrane region" description="Helical" evidence="2">
    <location>
        <begin position="8"/>
        <end position="28"/>
    </location>
</feature>
<feature type="transmembrane region" description="Helical" evidence="2">
    <location>
        <begin position="54"/>
        <end position="74"/>
    </location>
</feature>
<feature type="transmembrane region" description="Helical" evidence="2">
    <location>
        <begin position="84"/>
        <end position="104"/>
    </location>
</feature>
<feature type="transmembrane region" description="Helical" evidence="2">
    <location>
        <begin position="129"/>
        <end position="149"/>
    </location>
</feature>
<feature type="transmembrane region" description="Helical" evidence="2">
    <location>
        <begin position="179"/>
        <end position="199"/>
    </location>
</feature>
<feature type="transmembrane region" description="Helical" evidence="2">
    <location>
        <begin position="215"/>
        <end position="235"/>
    </location>
</feature>
<feature type="transmembrane region" description="Helical" evidence="2">
    <location>
        <begin position="238"/>
        <end position="254"/>
    </location>
</feature>
<protein>
    <recommendedName>
        <fullName>High-affinity zinc uptake system membrane protein ZnuB</fullName>
    </recommendedName>
</protein>
<sequence length="262" mass="28547">MFELIFPGWLAGVLLSLTTGPLGSFIVWRRMSSFGDTLSHSSLLGIALSIAFNINSFYAILILMSFIAIILAWLEELLPVSLDTVLNIISHSSLSLGMVFISLISSKKEINITNYLFGDLLSVTKNDLITISISSILILSILLFRWHSILSSTINEELSQIDGINVLYARLTIMLMTAFTIAIAIKFVGALLITSLLIIPPATAQHFSGSPEKMVIIAIIVSILSVTGGISLSVFYNTPASPSIVLCSSFLCLISNIKKHFY</sequence>